<gene>
    <name evidence="1" type="primary">nadE</name>
    <name type="ordered locus">Cvib_1211</name>
</gene>
<sequence length="277" mass="31039">MKVQDLDLNYQLVEEILSSFLRNEIRKFGFQSLVLGLSGGIDSAVVCELAVRALGAENVLAVKMPYRASSRESLEHAELMVERLSIRSEEHDISQPVDAFFTGIPEESRLRRGNIMARARMIVLYDVSARDGCLVAGTSNKTELLLGYGTMFGDMASAVNPIGDLYKSQVRGLARHLGIPAALIDKAPSADLWQGQSDEADLGFTYEEVDILLYQMLELRMDKESILAEGVPEPFYARVRQMVVRNQYKRLMPVIAKISGRTPGIDFRYARDWQEIS</sequence>
<comment type="function">
    <text evidence="1">Catalyzes the ATP-dependent amidation of deamido-NAD to form NAD. Uses ammonia as a nitrogen source.</text>
</comment>
<comment type="catalytic activity">
    <reaction evidence="1">
        <text>deamido-NAD(+) + NH4(+) + ATP = AMP + diphosphate + NAD(+) + H(+)</text>
        <dbReference type="Rhea" id="RHEA:21188"/>
        <dbReference type="ChEBI" id="CHEBI:15378"/>
        <dbReference type="ChEBI" id="CHEBI:28938"/>
        <dbReference type="ChEBI" id="CHEBI:30616"/>
        <dbReference type="ChEBI" id="CHEBI:33019"/>
        <dbReference type="ChEBI" id="CHEBI:57540"/>
        <dbReference type="ChEBI" id="CHEBI:58437"/>
        <dbReference type="ChEBI" id="CHEBI:456215"/>
        <dbReference type="EC" id="6.3.1.5"/>
    </reaction>
</comment>
<comment type="pathway">
    <text evidence="1">Cofactor biosynthesis; NAD(+) biosynthesis; NAD(+) from deamido-NAD(+) (ammonia route): step 1/1.</text>
</comment>
<comment type="subunit">
    <text evidence="1">Homodimer.</text>
</comment>
<comment type="similarity">
    <text evidence="1">Belongs to the NAD synthetase family.</text>
</comment>
<accession>A4SFG4</accession>
<organism>
    <name type="scientific">Chlorobium phaeovibrioides (strain DSM 265 / 1930)</name>
    <name type="common">Prosthecochloris vibrioformis (strain DSM 265)</name>
    <dbReference type="NCBI Taxonomy" id="290318"/>
    <lineage>
        <taxon>Bacteria</taxon>
        <taxon>Pseudomonadati</taxon>
        <taxon>Chlorobiota</taxon>
        <taxon>Chlorobiia</taxon>
        <taxon>Chlorobiales</taxon>
        <taxon>Chlorobiaceae</taxon>
        <taxon>Chlorobium/Pelodictyon group</taxon>
        <taxon>Chlorobium</taxon>
    </lineage>
</organism>
<proteinExistence type="inferred from homology"/>
<evidence type="ECO:0000255" key="1">
    <source>
        <dbReference type="HAMAP-Rule" id="MF_00193"/>
    </source>
</evidence>
<feature type="chain" id="PRO_1000077579" description="NH(3)-dependent NAD(+) synthetase">
    <location>
        <begin position="1"/>
        <end position="277"/>
    </location>
</feature>
<feature type="binding site" evidence="1">
    <location>
        <begin position="36"/>
        <end position="43"/>
    </location>
    <ligand>
        <name>ATP</name>
        <dbReference type="ChEBI" id="CHEBI:30616"/>
    </ligand>
</feature>
<feature type="binding site" evidence="1">
    <location>
        <position position="42"/>
    </location>
    <ligand>
        <name>Mg(2+)</name>
        <dbReference type="ChEBI" id="CHEBI:18420"/>
    </ligand>
</feature>
<feature type="binding site" evidence="1">
    <location>
        <position position="118"/>
    </location>
    <ligand>
        <name>deamido-NAD(+)</name>
        <dbReference type="ChEBI" id="CHEBI:58437"/>
    </ligand>
</feature>
<feature type="binding site" evidence="1">
    <location>
        <position position="138"/>
    </location>
    <ligand>
        <name>ATP</name>
        <dbReference type="ChEBI" id="CHEBI:30616"/>
    </ligand>
</feature>
<feature type="binding site" evidence="1">
    <location>
        <position position="143"/>
    </location>
    <ligand>
        <name>Mg(2+)</name>
        <dbReference type="ChEBI" id="CHEBI:18420"/>
    </ligand>
</feature>
<feature type="binding site" evidence="1">
    <location>
        <position position="167"/>
    </location>
    <ligand>
        <name>ATP</name>
        <dbReference type="ChEBI" id="CHEBI:30616"/>
    </ligand>
</feature>
<feature type="binding site" evidence="1">
    <location>
        <position position="189"/>
    </location>
    <ligand>
        <name>ATP</name>
        <dbReference type="ChEBI" id="CHEBI:30616"/>
    </ligand>
</feature>
<reference key="1">
    <citation type="submission" date="2007-03" db="EMBL/GenBank/DDBJ databases">
        <title>Complete sequence of Prosthecochloris vibrioformis DSM 265.</title>
        <authorList>
            <consortium name="US DOE Joint Genome Institute"/>
            <person name="Copeland A."/>
            <person name="Lucas S."/>
            <person name="Lapidus A."/>
            <person name="Barry K."/>
            <person name="Detter J.C."/>
            <person name="Glavina del Rio T."/>
            <person name="Hammon N."/>
            <person name="Israni S."/>
            <person name="Pitluck S."/>
            <person name="Schmutz J."/>
            <person name="Larimer F."/>
            <person name="Land M."/>
            <person name="Hauser L."/>
            <person name="Mikhailova N."/>
            <person name="Li T."/>
            <person name="Overmann J."/>
            <person name="Schuster S.C."/>
            <person name="Bryant D.A."/>
            <person name="Richardson P."/>
        </authorList>
    </citation>
    <scope>NUCLEOTIDE SEQUENCE [LARGE SCALE GENOMIC DNA]</scope>
    <source>
        <strain>DSM 265 / 1930</strain>
    </source>
</reference>
<dbReference type="EC" id="6.3.1.5" evidence="1"/>
<dbReference type="EMBL" id="CP000607">
    <property type="protein sequence ID" value="ABP37223.1"/>
    <property type="molecule type" value="Genomic_DNA"/>
</dbReference>
<dbReference type="SMR" id="A4SFG4"/>
<dbReference type="STRING" id="290318.Cvib_1211"/>
<dbReference type="KEGG" id="pvi:Cvib_1211"/>
<dbReference type="eggNOG" id="COG0171">
    <property type="taxonomic scope" value="Bacteria"/>
</dbReference>
<dbReference type="HOGENOM" id="CLU_059327_1_2_10"/>
<dbReference type="OrthoDB" id="9803818at2"/>
<dbReference type="UniPathway" id="UPA00253">
    <property type="reaction ID" value="UER00333"/>
</dbReference>
<dbReference type="GO" id="GO:0005737">
    <property type="term" value="C:cytoplasm"/>
    <property type="evidence" value="ECO:0007669"/>
    <property type="project" value="InterPro"/>
</dbReference>
<dbReference type="GO" id="GO:0005524">
    <property type="term" value="F:ATP binding"/>
    <property type="evidence" value="ECO:0007669"/>
    <property type="project" value="UniProtKB-UniRule"/>
</dbReference>
<dbReference type="GO" id="GO:0004359">
    <property type="term" value="F:glutaminase activity"/>
    <property type="evidence" value="ECO:0007669"/>
    <property type="project" value="InterPro"/>
</dbReference>
<dbReference type="GO" id="GO:0046872">
    <property type="term" value="F:metal ion binding"/>
    <property type="evidence" value="ECO:0007669"/>
    <property type="project" value="UniProtKB-KW"/>
</dbReference>
<dbReference type="GO" id="GO:0003952">
    <property type="term" value="F:NAD+ synthase (glutamine-hydrolyzing) activity"/>
    <property type="evidence" value="ECO:0007669"/>
    <property type="project" value="InterPro"/>
</dbReference>
<dbReference type="GO" id="GO:0008795">
    <property type="term" value="F:NAD+ synthase activity"/>
    <property type="evidence" value="ECO:0007669"/>
    <property type="project" value="UniProtKB-UniRule"/>
</dbReference>
<dbReference type="GO" id="GO:0009435">
    <property type="term" value="P:NAD biosynthetic process"/>
    <property type="evidence" value="ECO:0007669"/>
    <property type="project" value="UniProtKB-UniRule"/>
</dbReference>
<dbReference type="CDD" id="cd00553">
    <property type="entry name" value="NAD_synthase"/>
    <property type="match status" value="1"/>
</dbReference>
<dbReference type="FunFam" id="3.40.50.620:FF:000106">
    <property type="entry name" value="Glutamine-dependent NAD(+) synthetase"/>
    <property type="match status" value="1"/>
</dbReference>
<dbReference type="Gene3D" id="3.40.50.620">
    <property type="entry name" value="HUPs"/>
    <property type="match status" value="1"/>
</dbReference>
<dbReference type="HAMAP" id="MF_00193">
    <property type="entry name" value="NadE_ammonia_dep"/>
    <property type="match status" value="1"/>
</dbReference>
<dbReference type="InterPro" id="IPR022310">
    <property type="entry name" value="NAD/GMP_synthase"/>
</dbReference>
<dbReference type="InterPro" id="IPR003694">
    <property type="entry name" value="NAD_synthase"/>
</dbReference>
<dbReference type="InterPro" id="IPR022926">
    <property type="entry name" value="NH(3)-dep_NAD(+)_synth"/>
</dbReference>
<dbReference type="InterPro" id="IPR014729">
    <property type="entry name" value="Rossmann-like_a/b/a_fold"/>
</dbReference>
<dbReference type="NCBIfam" id="TIGR00552">
    <property type="entry name" value="nadE"/>
    <property type="match status" value="1"/>
</dbReference>
<dbReference type="NCBIfam" id="NF010587">
    <property type="entry name" value="PRK13980.1"/>
    <property type="match status" value="1"/>
</dbReference>
<dbReference type="PANTHER" id="PTHR23090:SF9">
    <property type="entry name" value="GLUTAMINE-DEPENDENT NAD(+) SYNTHETASE"/>
    <property type="match status" value="1"/>
</dbReference>
<dbReference type="PANTHER" id="PTHR23090">
    <property type="entry name" value="NH 3 /GLUTAMINE-DEPENDENT NAD + SYNTHETASE"/>
    <property type="match status" value="1"/>
</dbReference>
<dbReference type="Pfam" id="PF02540">
    <property type="entry name" value="NAD_synthase"/>
    <property type="match status" value="1"/>
</dbReference>
<dbReference type="SUPFAM" id="SSF52402">
    <property type="entry name" value="Adenine nucleotide alpha hydrolases-like"/>
    <property type="match status" value="1"/>
</dbReference>
<protein>
    <recommendedName>
        <fullName evidence="1">NH(3)-dependent NAD(+) synthetase</fullName>
        <ecNumber evidence="1">6.3.1.5</ecNumber>
    </recommendedName>
</protein>
<name>NADE_CHLPM</name>
<keyword id="KW-0067">ATP-binding</keyword>
<keyword id="KW-0436">Ligase</keyword>
<keyword id="KW-0460">Magnesium</keyword>
<keyword id="KW-0479">Metal-binding</keyword>
<keyword id="KW-0520">NAD</keyword>
<keyword id="KW-0547">Nucleotide-binding</keyword>